<accession>B4T6D6</accession>
<protein>
    <recommendedName>
        <fullName evidence="1">Chaperone protein DnaK</fullName>
    </recommendedName>
    <alternativeName>
        <fullName evidence="1">HSP70</fullName>
    </alternativeName>
    <alternativeName>
        <fullName evidence="1">Heat shock 70 kDa protein</fullName>
    </alternativeName>
    <alternativeName>
        <fullName evidence="1">Heat shock protein 70</fullName>
    </alternativeName>
</protein>
<comment type="function">
    <text evidence="1">Acts as a chaperone.</text>
</comment>
<comment type="induction">
    <text evidence="1">By stress conditions e.g. heat shock.</text>
</comment>
<comment type="similarity">
    <text evidence="1">Belongs to the heat shock protein 70 family.</text>
</comment>
<proteinExistence type="inferred from homology"/>
<name>DNAK_SALNS</name>
<dbReference type="EMBL" id="CP001113">
    <property type="protein sequence ID" value="ACF63105.1"/>
    <property type="molecule type" value="Genomic_DNA"/>
</dbReference>
<dbReference type="RefSeq" id="WP_000516125.1">
    <property type="nucleotide sequence ID" value="NZ_CCMR01000003.1"/>
</dbReference>
<dbReference type="SMR" id="B4T6D6"/>
<dbReference type="KEGG" id="see:SNSL254_A0013"/>
<dbReference type="HOGENOM" id="CLU_005965_2_1_6"/>
<dbReference type="Proteomes" id="UP000008824">
    <property type="component" value="Chromosome"/>
</dbReference>
<dbReference type="GO" id="GO:0005524">
    <property type="term" value="F:ATP binding"/>
    <property type="evidence" value="ECO:0007669"/>
    <property type="project" value="UniProtKB-UniRule"/>
</dbReference>
<dbReference type="GO" id="GO:0140662">
    <property type="term" value="F:ATP-dependent protein folding chaperone"/>
    <property type="evidence" value="ECO:0007669"/>
    <property type="project" value="InterPro"/>
</dbReference>
<dbReference type="GO" id="GO:0051082">
    <property type="term" value="F:unfolded protein binding"/>
    <property type="evidence" value="ECO:0007669"/>
    <property type="project" value="InterPro"/>
</dbReference>
<dbReference type="CDD" id="cd10234">
    <property type="entry name" value="ASKHA_NBD_HSP70_DnaK-like"/>
    <property type="match status" value="1"/>
</dbReference>
<dbReference type="FunFam" id="2.60.34.10:FF:000014">
    <property type="entry name" value="Chaperone protein DnaK HSP70"/>
    <property type="match status" value="1"/>
</dbReference>
<dbReference type="FunFam" id="3.30.30.30:FF:000003">
    <property type="entry name" value="Heat shock protein 9"/>
    <property type="match status" value="1"/>
</dbReference>
<dbReference type="FunFam" id="1.20.1270.10:FF:000001">
    <property type="entry name" value="Molecular chaperone DnaK"/>
    <property type="match status" value="1"/>
</dbReference>
<dbReference type="FunFam" id="3.30.420.40:FF:000004">
    <property type="entry name" value="Molecular chaperone DnaK"/>
    <property type="match status" value="1"/>
</dbReference>
<dbReference type="FunFam" id="3.90.640.10:FF:000003">
    <property type="entry name" value="Molecular chaperone DnaK"/>
    <property type="match status" value="1"/>
</dbReference>
<dbReference type="Gene3D" id="1.20.1270.10">
    <property type="match status" value="1"/>
</dbReference>
<dbReference type="Gene3D" id="3.30.420.40">
    <property type="match status" value="2"/>
</dbReference>
<dbReference type="Gene3D" id="3.90.640.10">
    <property type="entry name" value="Actin, Chain A, domain 4"/>
    <property type="match status" value="1"/>
</dbReference>
<dbReference type="Gene3D" id="2.60.34.10">
    <property type="entry name" value="Substrate Binding Domain Of DNAk, Chain A, domain 1"/>
    <property type="match status" value="1"/>
</dbReference>
<dbReference type="HAMAP" id="MF_00332">
    <property type="entry name" value="DnaK"/>
    <property type="match status" value="1"/>
</dbReference>
<dbReference type="InterPro" id="IPR043129">
    <property type="entry name" value="ATPase_NBD"/>
</dbReference>
<dbReference type="InterPro" id="IPR012725">
    <property type="entry name" value="Chaperone_DnaK"/>
</dbReference>
<dbReference type="InterPro" id="IPR018181">
    <property type="entry name" value="Heat_shock_70_CS"/>
</dbReference>
<dbReference type="InterPro" id="IPR029048">
    <property type="entry name" value="HSP70_C_sf"/>
</dbReference>
<dbReference type="InterPro" id="IPR029047">
    <property type="entry name" value="HSP70_peptide-bd_sf"/>
</dbReference>
<dbReference type="InterPro" id="IPR013126">
    <property type="entry name" value="Hsp_70_fam"/>
</dbReference>
<dbReference type="NCBIfam" id="NF001413">
    <property type="entry name" value="PRK00290.1"/>
    <property type="match status" value="1"/>
</dbReference>
<dbReference type="NCBIfam" id="NF003520">
    <property type="entry name" value="PRK05183.1"/>
    <property type="match status" value="1"/>
</dbReference>
<dbReference type="NCBIfam" id="TIGR02350">
    <property type="entry name" value="prok_dnaK"/>
    <property type="match status" value="1"/>
</dbReference>
<dbReference type="PANTHER" id="PTHR19375">
    <property type="entry name" value="HEAT SHOCK PROTEIN 70KDA"/>
    <property type="match status" value="1"/>
</dbReference>
<dbReference type="Pfam" id="PF00012">
    <property type="entry name" value="HSP70"/>
    <property type="match status" value="1"/>
</dbReference>
<dbReference type="PRINTS" id="PR00301">
    <property type="entry name" value="HEATSHOCK70"/>
</dbReference>
<dbReference type="SUPFAM" id="SSF53067">
    <property type="entry name" value="Actin-like ATPase domain"/>
    <property type="match status" value="2"/>
</dbReference>
<dbReference type="SUPFAM" id="SSF100934">
    <property type="entry name" value="Heat shock protein 70kD (HSP70), C-terminal subdomain"/>
    <property type="match status" value="1"/>
</dbReference>
<dbReference type="SUPFAM" id="SSF100920">
    <property type="entry name" value="Heat shock protein 70kD (HSP70), peptide-binding domain"/>
    <property type="match status" value="1"/>
</dbReference>
<dbReference type="PROSITE" id="PS00297">
    <property type="entry name" value="HSP70_1"/>
    <property type="match status" value="1"/>
</dbReference>
<dbReference type="PROSITE" id="PS00329">
    <property type="entry name" value="HSP70_2"/>
    <property type="match status" value="1"/>
</dbReference>
<dbReference type="PROSITE" id="PS01036">
    <property type="entry name" value="HSP70_3"/>
    <property type="match status" value="1"/>
</dbReference>
<evidence type="ECO:0000255" key="1">
    <source>
        <dbReference type="HAMAP-Rule" id="MF_00332"/>
    </source>
</evidence>
<evidence type="ECO:0000256" key="2">
    <source>
        <dbReference type="SAM" id="MobiDB-lite"/>
    </source>
</evidence>
<gene>
    <name evidence="1" type="primary">dnaK</name>
    <name type="ordered locus">SNSL254_A0013</name>
</gene>
<keyword id="KW-0067">ATP-binding</keyword>
<keyword id="KW-0143">Chaperone</keyword>
<keyword id="KW-0547">Nucleotide-binding</keyword>
<keyword id="KW-0597">Phosphoprotein</keyword>
<keyword id="KW-0346">Stress response</keyword>
<reference key="1">
    <citation type="journal article" date="2011" name="J. Bacteriol.">
        <title>Comparative genomics of 28 Salmonella enterica isolates: evidence for CRISPR-mediated adaptive sublineage evolution.</title>
        <authorList>
            <person name="Fricke W.F."/>
            <person name="Mammel M.K."/>
            <person name="McDermott P.F."/>
            <person name="Tartera C."/>
            <person name="White D.G."/>
            <person name="Leclerc J.E."/>
            <person name="Ravel J."/>
            <person name="Cebula T.A."/>
        </authorList>
    </citation>
    <scope>NUCLEOTIDE SEQUENCE [LARGE SCALE GENOMIC DNA]</scope>
    <source>
        <strain>SL254</strain>
    </source>
</reference>
<organism>
    <name type="scientific">Salmonella newport (strain SL254)</name>
    <dbReference type="NCBI Taxonomy" id="423368"/>
    <lineage>
        <taxon>Bacteria</taxon>
        <taxon>Pseudomonadati</taxon>
        <taxon>Pseudomonadota</taxon>
        <taxon>Gammaproteobacteria</taxon>
        <taxon>Enterobacterales</taxon>
        <taxon>Enterobacteriaceae</taxon>
        <taxon>Salmonella</taxon>
    </lineage>
</organism>
<feature type="chain" id="PRO_1000119754" description="Chaperone protein DnaK">
    <location>
        <begin position="1"/>
        <end position="638"/>
    </location>
</feature>
<feature type="region of interest" description="Disordered" evidence="2">
    <location>
        <begin position="603"/>
        <end position="638"/>
    </location>
</feature>
<feature type="compositionally biased region" description="Low complexity" evidence="2">
    <location>
        <begin position="603"/>
        <end position="620"/>
    </location>
</feature>
<feature type="modified residue" description="Phosphothreonine; by autocatalysis" evidence="1">
    <location>
        <position position="199"/>
    </location>
</feature>
<sequence length="638" mass="69258">MGKIIGIDLGTTNSCVAIMDGTQARVLENAEGDRTTPSIIAYTQDGETLVGQPAKRQAVTNPQNTLFAIKRLIGRRFQDEEVQRDVSIMPYKIIGADNGDAWLDVKGQKMAPPQISAEVLKKMKKTAEDYLGEPVTEAVITVPAYFNDAQRQATKDAGRIAGLEVKRIINEPTAAALAYGLDKEVGNRTIAVYDLGGGTFDISIIEIDEVDGEKTFEVLATNGDTHLGGEDFDTRLINYLVDEFKKDQGIDLRNDPLAMQRLKEAAEKAKIELSSAQQTDVNLPYITADATGPKHMNIKVTRAKLESLVEDLVNRSIEPLKVALQDAGLSVSDINDVILVGGQTRMPMVQKKVAEFFGKEPRKDVNPDEAVAIGAAVQGGVLTGDVKDVLLLDVTPLSLGIETMGGVMTPLITKNTTIPTKHSQVFSTAEDNQSAVTIHVLQGERKRASDNKSLGQFNLDGINPAPRGMPQIEVTFDIDADGILHVSAKDKNSGKEQKITIKASSGLNEEEIQKMVRDAEANAESDRKFEELVQTRNQGDHLLHSTRKQVEEAGDKLPADDKTAIESALNALETALKGEDKAAIEAKMQELAQVSQKLMEIAQQQHAQQQAGSADASANNAKDDDVVDAEFEEVKDKK</sequence>